<keyword id="KW-0687">Ribonucleoprotein</keyword>
<keyword id="KW-0689">Ribosomal protein</keyword>
<keyword id="KW-0694">RNA-binding</keyword>
<keyword id="KW-0699">rRNA-binding</keyword>
<feature type="chain" id="PRO_0000294790" description="Small ribosomal subunit protein uS11">
    <location>
        <begin position="1"/>
        <end position="129"/>
    </location>
</feature>
<name>RS11_CHESB</name>
<reference key="1">
    <citation type="submission" date="2006-06" db="EMBL/GenBank/DDBJ databases">
        <title>Complete sequence of chromosome of Mesorhizobium sp. BNC1.</title>
        <authorList>
            <consortium name="US DOE Joint Genome Institute"/>
            <person name="Copeland A."/>
            <person name="Lucas S."/>
            <person name="Lapidus A."/>
            <person name="Barry K."/>
            <person name="Detter J.C."/>
            <person name="Glavina del Rio T."/>
            <person name="Hammon N."/>
            <person name="Israni S."/>
            <person name="Dalin E."/>
            <person name="Tice H."/>
            <person name="Pitluck S."/>
            <person name="Chertkov O."/>
            <person name="Brettin T."/>
            <person name="Bruce D."/>
            <person name="Han C."/>
            <person name="Tapia R."/>
            <person name="Gilna P."/>
            <person name="Schmutz J."/>
            <person name="Larimer F."/>
            <person name="Land M."/>
            <person name="Hauser L."/>
            <person name="Kyrpides N."/>
            <person name="Mikhailova N."/>
            <person name="Richardson P."/>
        </authorList>
    </citation>
    <scope>NUCLEOTIDE SEQUENCE [LARGE SCALE GENOMIC DNA]</scope>
    <source>
        <strain>BNC1</strain>
    </source>
</reference>
<organism>
    <name type="scientific">Chelativorans sp. (strain BNC1)</name>
    <dbReference type="NCBI Taxonomy" id="266779"/>
    <lineage>
        <taxon>Bacteria</taxon>
        <taxon>Pseudomonadati</taxon>
        <taxon>Pseudomonadota</taxon>
        <taxon>Alphaproteobacteria</taxon>
        <taxon>Hyphomicrobiales</taxon>
        <taxon>Phyllobacteriaceae</taxon>
        <taxon>Chelativorans</taxon>
    </lineage>
</organism>
<accession>Q11HS5</accession>
<gene>
    <name evidence="1" type="primary">rpsK</name>
    <name type="ordered locus">Meso_1655</name>
</gene>
<evidence type="ECO:0000255" key="1">
    <source>
        <dbReference type="HAMAP-Rule" id="MF_01310"/>
    </source>
</evidence>
<evidence type="ECO:0000305" key="2"/>
<proteinExistence type="inferred from homology"/>
<sequence length="129" mass="13875">MAKEAARVRRRERKNISSGVAHVNSTFNNTMITITDAQGNAIAWSSAGAQGFKGSRKSTPFAAQVAAEDCARKAQEHGMRTLEVEVSGPGSGRESALRALQAAGFTITSIRDVTPIPHNGCRPRKKRRV</sequence>
<dbReference type="EMBL" id="CP000390">
    <property type="protein sequence ID" value="ABG63050.1"/>
    <property type="molecule type" value="Genomic_DNA"/>
</dbReference>
<dbReference type="SMR" id="Q11HS5"/>
<dbReference type="STRING" id="266779.Meso_1655"/>
<dbReference type="KEGG" id="mes:Meso_1655"/>
<dbReference type="eggNOG" id="COG0100">
    <property type="taxonomic scope" value="Bacteria"/>
</dbReference>
<dbReference type="HOGENOM" id="CLU_072439_5_0_5"/>
<dbReference type="OrthoDB" id="9806415at2"/>
<dbReference type="GO" id="GO:1990904">
    <property type="term" value="C:ribonucleoprotein complex"/>
    <property type="evidence" value="ECO:0007669"/>
    <property type="project" value="UniProtKB-KW"/>
</dbReference>
<dbReference type="GO" id="GO:0005840">
    <property type="term" value="C:ribosome"/>
    <property type="evidence" value="ECO:0007669"/>
    <property type="project" value="UniProtKB-KW"/>
</dbReference>
<dbReference type="GO" id="GO:0019843">
    <property type="term" value="F:rRNA binding"/>
    <property type="evidence" value="ECO:0007669"/>
    <property type="project" value="UniProtKB-UniRule"/>
</dbReference>
<dbReference type="GO" id="GO:0003735">
    <property type="term" value="F:structural constituent of ribosome"/>
    <property type="evidence" value="ECO:0007669"/>
    <property type="project" value="InterPro"/>
</dbReference>
<dbReference type="GO" id="GO:0006412">
    <property type="term" value="P:translation"/>
    <property type="evidence" value="ECO:0007669"/>
    <property type="project" value="UniProtKB-UniRule"/>
</dbReference>
<dbReference type="FunFam" id="3.30.420.80:FF:000001">
    <property type="entry name" value="30S ribosomal protein S11"/>
    <property type="match status" value="1"/>
</dbReference>
<dbReference type="Gene3D" id="3.30.420.80">
    <property type="entry name" value="Ribosomal protein S11"/>
    <property type="match status" value="1"/>
</dbReference>
<dbReference type="HAMAP" id="MF_01310">
    <property type="entry name" value="Ribosomal_uS11"/>
    <property type="match status" value="1"/>
</dbReference>
<dbReference type="InterPro" id="IPR001971">
    <property type="entry name" value="Ribosomal_uS11"/>
</dbReference>
<dbReference type="InterPro" id="IPR019981">
    <property type="entry name" value="Ribosomal_uS11_bac-type"/>
</dbReference>
<dbReference type="InterPro" id="IPR018102">
    <property type="entry name" value="Ribosomal_uS11_CS"/>
</dbReference>
<dbReference type="InterPro" id="IPR036967">
    <property type="entry name" value="Ribosomal_uS11_sf"/>
</dbReference>
<dbReference type="NCBIfam" id="NF003698">
    <property type="entry name" value="PRK05309.1"/>
    <property type="match status" value="1"/>
</dbReference>
<dbReference type="NCBIfam" id="TIGR03632">
    <property type="entry name" value="uS11_bact"/>
    <property type="match status" value="1"/>
</dbReference>
<dbReference type="PANTHER" id="PTHR11759">
    <property type="entry name" value="40S RIBOSOMAL PROTEIN S14/30S RIBOSOMAL PROTEIN S11"/>
    <property type="match status" value="1"/>
</dbReference>
<dbReference type="Pfam" id="PF00411">
    <property type="entry name" value="Ribosomal_S11"/>
    <property type="match status" value="1"/>
</dbReference>
<dbReference type="PIRSF" id="PIRSF002131">
    <property type="entry name" value="Ribosomal_S11"/>
    <property type="match status" value="1"/>
</dbReference>
<dbReference type="SUPFAM" id="SSF53137">
    <property type="entry name" value="Translational machinery components"/>
    <property type="match status" value="1"/>
</dbReference>
<dbReference type="PROSITE" id="PS00054">
    <property type="entry name" value="RIBOSOMAL_S11"/>
    <property type="match status" value="1"/>
</dbReference>
<comment type="function">
    <text evidence="1">Located on the platform of the 30S subunit, it bridges several disparate RNA helices of the 16S rRNA. Forms part of the Shine-Dalgarno cleft in the 70S ribosome.</text>
</comment>
<comment type="subunit">
    <text evidence="1">Part of the 30S ribosomal subunit. Interacts with proteins S7 and S18. Binds to IF-3.</text>
</comment>
<comment type="similarity">
    <text evidence="1">Belongs to the universal ribosomal protein uS11 family.</text>
</comment>
<protein>
    <recommendedName>
        <fullName evidence="1">Small ribosomal subunit protein uS11</fullName>
    </recommendedName>
    <alternativeName>
        <fullName evidence="2">30S ribosomal protein S11</fullName>
    </alternativeName>
</protein>